<keyword id="KW-1035">Host cytoplasm</keyword>
<keyword id="KW-1048">Host nucleus</keyword>
<keyword id="KW-0945">Host-virus interaction</keyword>
<keyword id="KW-0378">Hydrolase</keyword>
<keyword id="KW-1127">Modulation of host ubiquitin pathway by viral deubiquitinase</keyword>
<keyword id="KW-1130">Modulation of host ubiquitin pathway by virus</keyword>
<keyword id="KW-0645">Protease</keyword>
<keyword id="KW-1185">Reference proteome</keyword>
<keyword id="KW-0677">Repeat</keyword>
<keyword id="KW-0788">Thiol protease</keyword>
<keyword id="KW-0833">Ubl conjugation pathway</keyword>
<keyword id="KW-0946">Virion</keyword>
<keyword id="KW-0920">Virion tegument</keyword>
<accession>Q9E6N3</accession>
<feature type="chain" id="PRO_0000406498" description="Large tegument protein deneddylase">
    <location>
        <begin position="1"/>
        <end position="3342"/>
    </location>
</feature>
<feature type="domain" description="Peptidase C76" evidence="1">
    <location>
        <begin position="78"/>
        <end position="298"/>
    </location>
</feature>
<feature type="region of interest" description="Deubiquitination activity" evidence="1">
    <location>
        <begin position="1"/>
        <end position="302"/>
    </location>
</feature>
<feature type="region of interest" description="Disordered" evidence="2">
    <location>
        <begin position="472"/>
        <end position="554"/>
    </location>
</feature>
<feature type="region of interest" description="Interaction with inner tegument protein" evidence="1">
    <location>
        <begin position="630"/>
        <end position="656"/>
    </location>
</feature>
<feature type="region of interest" description="Disordered" evidence="2">
    <location>
        <begin position="2584"/>
        <end position="2603"/>
    </location>
</feature>
<feature type="region of interest" description="Disordered" evidence="2">
    <location>
        <begin position="2654"/>
        <end position="2987"/>
    </location>
</feature>
<feature type="region of interest" description="Disordered" evidence="2">
    <location>
        <begin position="3196"/>
        <end position="3279"/>
    </location>
</feature>
<feature type="compositionally biased region" description="Low complexity" evidence="2">
    <location>
        <begin position="480"/>
        <end position="494"/>
    </location>
</feature>
<feature type="compositionally biased region" description="Polar residues" evidence="2">
    <location>
        <begin position="514"/>
        <end position="526"/>
    </location>
</feature>
<feature type="compositionally biased region" description="Pro residues" evidence="2">
    <location>
        <begin position="2701"/>
        <end position="2743"/>
    </location>
</feature>
<feature type="compositionally biased region" description="Pro residues" evidence="2">
    <location>
        <begin position="2751"/>
        <end position="2777"/>
    </location>
</feature>
<feature type="compositionally biased region" description="Pro residues" evidence="2">
    <location>
        <begin position="2785"/>
        <end position="2799"/>
    </location>
</feature>
<feature type="compositionally biased region" description="Pro residues" evidence="2">
    <location>
        <begin position="2823"/>
        <end position="2837"/>
    </location>
</feature>
<feature type="compositionally biased region" description="Pro residues" evidence="2">
    <location>
        <begin position="2845"/>
        <end position="2897"/>
    </location>
</feature>
<feature type="compositionally biased region" description="Polar residues" evidence="2">
    <location>
        <begin position="2911"/>
        <end position="2947"/>
    </location>
</feature>
<feature type="compositionally biased region" description="Low complexity" evidence="2">
    <location>
        <begin position="3264"/>
        <end position="3279"/>
    </location>
</feature>
<feature type="active site" evidence="1">
    <location>
        <position position="98"/>
    </location>
</feature>
<feature type="active site" evidence="1">
    <location>
        <position position="232"/>
    </location>
</feature>
<feature type="active site" evidence="1">
    <location>
        <position position="234"/>
    </location>
</feature>
<feature type="site" description="Important for catalytic activity" evidence="1">
    <location>
        <position position="85"/>
    </location>
</feature>
<dbReference type="EC" id="3.4.19.12" evidence="1"/>
<dbReference type="EC" id="3.4.22.-" evidence="1"/>
<dbReference type="EMBL" id="AF243438">
    <property type="protein sequence ID" value="AAG14229.1"/>
    <property type="molecule type" value="Genomic_DNA"/>
</dbReference>
<dbReference type="RefSeq" id="YP_001033965.1">
    <property type="nucleotide sequence ID" value="NC_002229.3"/>
</dbReference>
<dbReference type="GeneID" id="4811510"/>
<dbReference type="KEGG" id="vg:4811510"/>
<dbReference type="Proteomes" id="UP000008072">
    <property type="component" value="Segment"/>
</dbReference>
<dbReference type="GO" id="GO:0030430">
    <property type="term" value="C:host cell cytoplasm"/>
    <property type="evidence" value="ECO:0007669"/>
    <property type="project" value="UniProtKB-SubCell"/>
</dbReference>
<dbReference type="GO" id="GO:0042025">
    <property type="term" value="C:host cell nucleus"/>
    <property type="evidence" value="ECO:0007669"/>
    <property type="project" value="UniProtKB-SubCell"/>
</dbReference>
<dbReference type="GO" id="GO:0019033">
    <property type="term" value="C:viral tegument"/>
    <property type="evidence" value="ECO:0007669"/>
    <property type="project" value="UniProtKB-SubCell"/>
</dbReference>
<dbReference type="GO" id="GO:0004843">
    <property type="term" value="F:cysteine-type deubiquitinase activity"/>
    <property type="evidence" value="ECO:0007669"/>
    <property type="project" value="UniProtKB-EC"/>
</dbReference>
<dbReference type="GO" id="GO:0019784">
    <property type="term" value="F:deNEDDylase activity"/>
    <property type="evidence" value="ECO:0007669"/>
    <property type="project" value="InterPro"/>
</dbReference>
<dbReference type="GO" id="GO:0006508">
    <property type="term" value="P:proteolysis"/>
    <property type="evidence" value="ECO:0007669"/>
    <property type="project" value="UniProtKB-KW"/>
</dbReference>
<dbReference type="GO" id="GO:0039648">
    <property type="term" value="P:symbiont-mediated perturbation of host ubiquitin-like protein modification"/>
    <property type="evidence" value="ECO:0007669"/>
    <property type="project" value="UniProtKB-KW"/>
</dbReference>
<dbReference type="GO" id="GO:0039693">
    <property type="term" value="P:viral DNA genome replication"/>
    <property type="evidence" value="ECO:0007669"/>
    <property type="project" value="InterPro"/>
</dbReference>
<dbReference type="Gene3D" id="3.90.70.120">
    <property type="match status" value="1"/>
</dbReference>
<dbReference type="HAMAP" id="MF_04044">
    <property type="entry name" value="HSV_LTP"/>
    <property type="match status" value="1"/>
</dbReference>
<dbReference type="InterPro" id="IPR005210">
    <property type="entry name" value="Herpes_LT_deneddylase"/>
</dbReference>
<dbReference type="InterPro" id="IPR006928">
    <property type="entry name" value="Herpes_teg_USP"/>
</dbReference>
<dbReference type="InterPro" id="IPR034702">
    <property type="entry name" value="HSV_LTP"/>
</dbReference>
<dbReference type="InterPro" id="IPR038765">
    <property type="entry name" value="Papain-like_cys_pep_sf"/>
</dbReference>
<dbReference type="InterPro" id="IPR050972">
    <property type="entry name" value="SDr-like"/>
</dbReference>
<dbReference type="PANTHER" id="PTHR34403:SF14">
    <property type="entry name" value="OS05G0225800 PROTEIN"/>
    <property type="match status" value="1"/>
</dbReference>
<dbReference type="PANTHER" id="PTHR34403">
    <property type="entry name" value="TOL-PAL SYSTEM PROTEIN TOLA"/>
    <property type="match status" value="1"/>
</dbReference>
<dbReference type="Pfam" id="PF04843">
    <property type="entry name" value="Herpes_teg_N"/>
    <property type="match status" value="1"/>
</dbReference>
<dbReference type="Pfam" id="PF03586">
    <property type="entry name" value="Herpes_UL36"/>
    <property type="match status" value="1"/>
</dbReference>
<dbReference type="SUPFAM" id="SSF54001">
    <property type="entry name" value="Cysteine proteinases"/>
    <property type="match status" value="1"/>
</dbReference>
<dbReference type="PROSITE" id="PS51521">
    <property type="entry name" value="HTUSP"/>
    <property type="match status" value="1"/>
</dbReference>
<reference key="1">
    <citation type="journal article" date="2000" name="J. Virol.">
        <title>The genome of a very virulent Marek's disease virus.</title>
        <authorList>
            <person name="Tulman E.R."/>
            <person name="Afonso C.L."/>
            <person name="Lu Z."/>
            <person name="Zsak L."/>
            <person name="Rock D.L."/>
            <person name="Kutish G.F."/>
        </authorList>
    </citation>
    <scope>NUCLEOTIDE SEQUENCE [LARGE SCALE GENOMIC DNA]</scope>
</reference>
<organismHost>
    <name type="scientific">Gallus gallus</name>
    <name type="common">Chicken</name>
    <dbReference type="NCBI Taxonomy" id="9031"/>
</organismHost>
<protein>
    <recommendedName>
        <fullName evidence="1">Large tegument protein deneddylase</fullName>
        <ecNumber evidence="1">3.4.19.12</ecNumber>
        <ecNumber evidence="1">3.4.22.-</ecNumber>
    </recommendedName>
</protein>
<proteinExistence type="inferred from homology"/>
<organism>
    <name type="scientific">Gallid herpesvirus 2 (strain Chicken/Md5/ATCC VR-987)</name>
    <name type="common">GaHV-2</name>
    <name type="synonym">Marek's disease herpesvirus type 1</name>
    <dbReference type="NCBI Taxonomy" id="10389"/>
    <lineage>
        <taxon>Viruses</taxon>
        <taxon>Duplodnaviria</taxon>
        <taxon>Heunggongvirae</taxon>
        <taxon>Peploviricota</taxon>
        <taxon>Herviviricetes</taxon>
        <taxon>Herpesvirales</taxon>
        <taxon>Orthoherpesviridae</taxon>
        <taxon>Alphaherpesvirinae</taxon>
        <taxon>Mardivirus</taxon>
        <taxon>Mardivirus gallidalpha2</taxon>
        <taxon>Gallid alphaherpesvirus 2</taxon>
    </lineage>
</organism>
<evidence type="ECO:0000255" key="1">
    <source>
        <dbReference type="HAMAP-Rule" id="MF_04044"/>
    </source>
</evidence>
<evidence type="ECO:0000256" key="2">
    <source>
        <dbReference type="SAM" id="MobiDB-lite"/>
    </source>
</evidence>
<comment type="function">
    <text evidence="1">Large tegument protein that plays multiple roles in the viral cycle. During viral entry, remains associated with the capsid while most of the tegument is detached and participates in the capsid transport toward the host nucleus. Plays a role in the routing of the capsid at the nuclear pore complex and subsequent uncoating. Within the host nucleus, acts as a deneddylase and promotes the degradation of nuclear CRLs (cullin-RING ubiquitin ligases) and thereby stabilizes nuclear CRL substrates, while cytoplasmic CRLs remain unaffected. These modifications prevent host cell cycle S-phase progression and create a favorable environment allowing efficient viral genome replication. Participates later in the secondary envelopment of capsids. Indeed, plays a linker role for the association of the outer viral tegument to the capsids together with the inner tegument protein.</text>
</comment>
<comment type="catalytic activity">
    <reaction evidence="1">
        <text>Thiol-dependent hydrolysis of ester, thioester, amide, peptide and isopeptide bonds formed by the C-terminal Gly of ubiquitin (a 76-residue protein attached to proteins as an intracellular targeting signal).</text>
        <dbReference type="EC" id="3.4.19.12"/>
    </reaction>
</comment>
<comment type="subunit">
    <text evidence="1">Interacts with host CUL1 and CUL4A; these interactions inhibit the E3 ligase activity of cullins. Interacts with inner tegument protein. Interacts with capsid vertex specific component CVC2. Interacts with the major capsid protein/MCP.</text>
</comment>
<comment type="subcellular location">
    <subcellularLocation>
        <location evidence="1">Virion tegument</location>
    </subcellularLocation>
    <subcellularLocation>
        <location evidence="1">Host cytoplasm</location>
    </subcellularLocation>
    <subcellularLocation>
        <location evidence="1">Host nucleus</location>
    </subcellularLocation>
    <text evidence="1">Tightly associated with the capsid.</text>
</comment>
<comment type="similarity">
    <text evidence="1">Belongs to the herpesviridae large tegument protein family.</text>
</comment>
<gene>
    <name type="primary">MDV049</name>
</gene>
<name>LTP_GAHVM</name>
<sequence length="3342" mass="367314">MTDSTDSRQATTNCRKYSRTTSNAPMLAANVLRDKSTSGLCSLDRKHDPYFGQIMDNPEVILDEWAKMVIDTTDVTVVAVGIRNQFAPDLSPASSVSCLRSSLAFLRIVFAYGLDTVISSDAIDRLLLQGKAWTIATSEDGTYTTCVPHDLPNRIISKDAGGNLCVAFSSSYGEFEFYLEENTPTILDTQISARTFIEQIWKKKRGDVYCLIVVGVLGIGVYRSGDGIYIFDPHGHGHIGQACIVRVSEGYFYQYLTSYADPSATPDWSATFVYFVSTVSICPPRDEIISTVSRIYGTSDIVLDLGRAREEDNRKVVSADFDPPSRPQPRLTKLVIGSTDTTIQGSDYPCIQAEDLNGEDSRPLDHNLSYNDAPTNTESVAPPSTKDCRDCINIQNPGETLDDTHSTIVDPSTKDSISVTAWQGVFSDVIEDPPPKTNFQFSFGTFAKVAENKIGTTSVEGCIRNYARHKRRRPLWTPQSSSENISLDGSSSSLSRKHSRKSKRTLESRIVEAVTSTESSDVTENVDTYPPVISNIPDEPTLGSSPTTSNRGEDTTVEHLLKNRPLFNFKSLTEDEDGLVQDRLWSDEYLSHYPLADIRDKIEDVACSIDSGLRIIVHVGSPYDSDGGLLYVCMMDIFARLFNYIIENGARTTSDRESVVGYEMAALLKAFTIPVYFTTFIASTGMVLSEASESIDLIERVLAENSKIGNLALSKMILVALEVEEVTDELHKSLDAIEKEVGTADPYGIYERMAAILVDTLYHNSGKLYSEKTSSNSNQTLTDRVISLCTLIRDIEAVAIRKAELILAEMEALEAGVRWMNTTLDAFIMGGSGSSPMIDAADIVAKTSSAVVTQRLGDIGKTVIDVVGHSLREYYLKVALYSVKALTASSSDVSRFKIVVTDQYEKINRFASSLSVIDDVMVLIASRSNARVPSPVSQAFESELLGNLLEIGSDLDVPEKLTTWKNLMTSMQVGGWISRRELDMLMKEIDIVNEKATRHETVLTELERLNELETRFGSYTDLDTTVELQKLDEAIKIGEDIVKLAIVLEDKKNATSLSSDVREKLRDTRRKNETFITHLRERYQEVKSTIEDLYSSIRKILRPLPKFVGLRALDSKVKVITESIPRGMGSFENFLASAPSDIIGSLQSDLWVLFIQYKTILSRPTTEVAAELSGLGVPFALAIRLVFGPQGSYPAASVFFGKHADVLSATIAAAAVEPMSVEKTMAVVSTLKAAISDIDRANAIAPPQGIMSISSTERSDAFLFLKALLSTAEIAADVANRGQHLESLIQSVRTILDNLITSNHKIRSLNPREVISENDTSVVASAKVEFSNAIQTVGNVTATLSTFEGLTYTSNPHIQRKIAELSKLIRSANQRAGELDIAIQTYEHNRISAERSRSEDLWISSINSLLLNAEVKSEFDAMEINRLEDAARTGGYDTIRYKSRAEKIVIAHARVLESSIESVLKFNPYSTQNMVHGLSPPIAALKSITWGDSFMTAAPYYTKLFGVNCDTVMDLLHISIAILRHANANSGNVDYYLLMGELESALKSYPNLVKYVNFYRSGYVKFMSFLAHLEQRRVEAHHASGRVALEISAALEDLARTHSPEGARRALEYGVSIIIPSVNTIMSIAEELKKDHVEELEGTAYSEYGAHLLRRDTDAMTSLIHRVTTAIEDAKTRGEAILKNLAEASYAADRESAELLANLKNLLRLVSMPSHIAKAIDRSETVNDIVTQAALLLTKVEETKELDSQTVEWLRHAESVIDSHDLTVRIDESGPMSIYADRIDALVNLSKRLEELKSELALAEVAWDDTWATFVHDKDRIDKSSEGFSSARESAARTKVSVNMINALRSNAEYPRLPAKIIGLIDTKYRDRVVVLDAFLTTVKEIEATQKQMEGLCEKIPSTFAINDLKKIYTQFEDIAKRLPKWYTKRVARYSRLLTLRLALYAGYSNTFEGNVGDPMLLPFDAGDANNGANHTSNVGVVNRYLKHRVASWIRPKVVATLQEAFSEIDSPGCLTYLDSTDKPLRYSLCFRTVGEKLAACLCEPAAIGIKPQIPIQPITTEETEAAAGMLSDIMTFRLGFVHDMANHLYSFTKYVRTKRHNWMQSDYIKALGTIYCALIAITLTRKNRSNLSDIYFIPGRRTPIVDKKELKKNAANGRGKQVVRLDPADVMVTIMANIPGHMLTFSKLDLIDQYDFMDKTIYEVMTDSISTVAFVNCLSVQLSKDNIPDPNCRPLSLTGSVWDPAGGSLFSVRYSDWRQGKLSDTDPLKLWEDLDGDAADGLAKIRAAIPSSLLTTTTVLARMCIPPTALAVIWSSLLPDGLEQNCKSYDDVVTARGDLASSLDVTTSLLSCSENKNISSITDSPNLYDLTGNVTTFTVVSTPPSRVLRVNAMDIATTATLFGARIVIAAECPEAYSSESGLSLCIRLFDSRHGSRGCFLEPTAVSSDMTSWGTKLLITDNNPIENACLGQQLEHLSRIVASKPLASAPPCLLIVDSGMAPIKVLWSKEILDPIPIIRLISEDDALISELPYVDAGIRKEPELANEHMVIADVQEASKFFSDESRIYPCPIYNKCVSPDLSRDGDADISSNRIDSEDDTYADSMGSGYLSIDPESMWDRVVENDMEGAQVQLLLPGDIIHHNDRHVSENMNYPQIGHLDISPNYRDPIDETSSNPPPFPKHSNLFPSDHDPTSESSSKPTPAPKPTPAPKPTPAPKPTPAPKPTPAPKPTPAPKPTPAPKPKPPPDPDFKPSPAPKPSPASKPTPAPKPSPAPKPKPPPDPDFKPTPAPKPSPASKPKPPPDPDFKPTPAPKPKPPPDPDFKPSPAPKPSPAPKPKPPPDPDFKPTPAPKPSPASKPSPASKPKPPPAPDSKPSPAPKPKPPPTPDSKPSPAPKPKSPSASKPLPVLFPNSDSKTSPVPNPNTFSASKIPPTSSIAEETKPCQSNLPAIPLITKPDSVKNGYTTLKTDDKRKGSQSRYRNEKSRKHMHNTHTAVYNTTFNWTGTAAASSRHDMELNQYSPGIVTFDNLIDKEGYRHESETIPRESYSEHRKDLDWMSTPTVIANASSSLITNNDYGGIGGIDLKKYRFKNGTGLLRQGSPTTRLHCRKNNSSRSITDILVGTASPTNEPSPLLQRLKAHTISGDKKANMDAGTIRGRLYDYSSFWPPCIQGACSTSPKTIDLKYLSSEQATVAYPKHDDTHHQTPTGLAPNDKHSDMHISSIITETDTKENSIPGYNNIPMRHSSESESLTSLDSDSDDSHLHVSGSTDTTTDGSSTSRVIPADALLTRRDFRNASRGALYALTKACKKVARQIVYVREQLRTKVATLAIELFKIKMILTG</sequence>